<protein>
    <recommendedName>
        <fullName>Histone-lysine N-methyltransferase, H3 lysine-9 specific SUVH3</fullName>
        <ecNumber evidence="5">2.1.1.367</ecNumber>
    </recommendedName>
    <alternativeName>
        <fullName>Histone H3-K9 methyltransferase 3</fullName>
        <shortName>H3-K9-HMTase 3</shortName>
    </alternativeName>
    <alternativeName>
        <fullName>Suppressor of variegation 3-9 homolog protein 3</fullName>
        <shortName>Su(var)3-9 homolog protein 3</shortName>
    </alternativeName>
</protein>
<evidence type="ECO:0000250" key="1"/>
<evidence type="ECO:0000255" key="2">
    <source>
        <dbReference type="PROSITE-ProRule" id="PRU00190"/>
    </source>
</evidence>
<evidence type="ECO:0000255" key="3">
    <source>
        <dbReference type="PROSITE-ProRule" id="PRU00358"/>
    </source>
</evidence>
<evidence type="ECO:0000256" key="4">
    <source>
        <dbReference type="SAM" id="MobiDB-lite"/>
    </source>
</evidence>
<evidence type="ECO:0000269" key="5">
    <source>
    </source>
</evidence>
<dbReference type="EC" id="2.1.1.367" evidence="5"/>
<dbReference type="EMBL" id="AY702654">
    <property type="protein sequence ID" value="AAV84356.1"/>
    <property type="molecule type" value="mRNA"/>
</dbReference>
<dbReference type="RefSeq" id="XP_001701764.1">
    <property type="nucleotide sequence ID" value="XM_001701712.1"/>
</dbReference>
<dbReference type="BioGRID" id="987255">
    <property type="interactions" value="1"/>
</dbReference>
<dbReference type="PaxDb" id="3055-EDP06739"/>
<dbReference type="EnsemblPlants" id="PNW86502">
    <property type="protein sequence ID" value="PNW86502"/>
    <property type="gene ID" value="CHLRE_02g089200v5"/>
</dbReference>
<dbReference type="Gramene" id="PNW86502">
    <property type="protein sequence ID" value="PNW86502"/>
    <property type="gene ID" value="CHLRE_02g089200v5"/>
</dbReference>
<dbReference type="KEGG" id="cre:CHLRE_02g089200v5"/>
<dbReference type="eggNOG" id="KOG1082">
    <property type="taxonomic scope" value="Eukaryota"/>
</dbReference>
<dbReference type="HOGENOM" id="CLU_308463_0_0_1"/>
<dbReference type="OMA" id="HVGLYAC"/>
<dbReference type="OrthoDB" id="5792673at2759"/>
<dbReference type="GO" id="GO:0005694">
    <property type="term" value="C:chromosome"/>
    <property type="evidence" value="ECO:0007669"/>
    <property type="project" value="UniProtKB-SubCell"/>
</dbReference>
<dbReference type="GO" id="GO:0005634">
    <property type="term" value="C:nucleus"/>
    <property type="evidence" value="ECO:0007669"/>
    <property type="project" value="UniProtKB-SubCell"/>
</dbReference>
<dbReference type="GO" id="GO:0140947">
    <property type="term" value="F:histone H3K9me2 methyltransferase activity"/>
    <property type="evidence" value="ECO:0007669"/>
    <property type="project" value="RHEA"/>
</dbReference>
<dbReference type="GO" id="GO:0008270">
    <property type="term" value="F:zinc ion binding"/>
    <property type="evidence" value="ECO:0007669"/>
    <property type="project" value="InterPro"/>
</dbReference>
<dbReference type="GO" id="GO:0032259">
    <property type="term" value="P:methylation"/>
    <property type="evidence" value="ECO:0007669"/>
    <property type="project" value="UniProtKB-KW"/>
</dbReference>
<dbReference type="Gene3D" id="2.170.270.10">
    <property type="entry name" value="SET domain"/>
    <property type="match status" value="2"/>
</dbReference>
<dbReference type="Gene3D" id="2.30.280.10">
    <property type="entry name" value="SRA-YDG"/>
    <property type="match status" value="1"/>
</dbReference>
<dbReference type="InterPro" id="IPR051357">
    <property type="entry name" value="H3K9_HMTase_SUVAR3-9"/>
</dbReference>
<dbReference type="InterPro" id="IPR007728">
    <property type="entry name" value="Pre-SET_dom"/>
</dbReference>
<dbReference type="InterPro" id="IPR015947">
    <property type="entry name" value="PUA-like_sf"/>
</dbReference>
<dbReference type="InterPro" id="IPR001214">
    <property type="entry name" value="SET_dom"/>
</dbReference>
<dbReference type="InterPro" id="IPR046341">
    <property type="entry name" value="SET_dom_sf"/>
</dbReference>
<dbReference type="InterPro" id="IPR036987">
    <property type="entry name" value="SRA-YDG_sf"/>
</dbReference>
<dbReference type="InterPro" id="IPR003105">
    <property type="entry name" value="SRA_YDG"/>
</dbReference>
<dbReference type="PANTHER" id="PTHR45660">
    <property type="entry name" value="HISTONE-LYSINE N-METHYLTRANSFERASE SETMAR"/>
    <property type="match status" value="1"/>
</dbReference>
<dbReference type="PANTHER" id="PTHR45660:SF13">
    <property type="entry name" value="HISTONE-LYSINE N-METHYLTRANSFERASE SETMAR"/>
    <property type="match status" value="1"/>
</dbReference>
<dbReference type="Pfam" id="PF02182">
    <property type="entry name" value="SAD_SRA"/>
    <property type="match status" value="1"/>
</dbReference>
<dbReference type="Pfam" id="PF00856">
    <property type="entry name" value="SET"/>
    <property type="match status" value="1"/>
</dbReference>
<dbReference type="SMART" id="SM00468">
    <property type="entry name" value="PreSET"/>
    <property type="match status" value="1"/>
</dbReference>
<dbReference type="SMART" id="SM00317">
    <property type="entry name" value="SET"/>
    <property type="match status" value="1"/>
</dbReference>
<dbReference type="SMART" id="SM00466">
    <property type="entry name" value="SRA"/>
    <property type="match status" value="1"/>
</dbReference>
<dbReference type="SUPFAM" id="SSF88697">
    <property type="entry name" value="PUA domain-like"/>
    <property type="match status" value="1"/>
</dbReference>
<dbReference type="SUPFAM" id="SSF82199">
    <property type="entry name" value="SET domain"/>
    <property type="match status" value="1"/>
</dbReference>
<dbReference type="PROSITE" id="PS50280">
    <property type="entry name" value="SET"/>
    <property type="match status" value="1"/>
</dbReference>
<dbReference type="PROSITE" id="PS51015">
    <property type="entry name" value="YDG"/>
    <property type="match status" value="1"/>
</dbReference>
<accession>Q5QD03</accession>
<sequence>MATIQLTDQQRKVLHEVACTTAAPVLDTASKDKIKQLLDDYDMRKAAMGSKPGANMVLPGQVLGEAGPFLDYGHPPGVALGDKFKDRGQVMVAGVHGTTVRGIHAPNAGSEHFVRGAYSVLMSGVYVDDEDMGEAFWYTGEGGMDGKKQVKDQQMASGSNAALKNNCDTRTPVRVVRGFVQEAGGGEGGGGGEGGGGAKKGKGGKGGGKKEKGLVYEGLYLVLECKMEPSKDGPQVCKFLMHGLPGHSTVSAKVEYNIFGNAGSAYSLHARRLAGAGAPAGGKRARKAAQDEKARELARQWMLSEIRRQYPGPELQLEDVSGGQEAVPIPVINQVNSERLPTDFAYTREYAWAPGVYQLVAPALRLADEEMLQFSREGDRGGVCGIAFNRHIAALDRRLEQEGRLPQGYEAHLEEQYNAAGCLMVTDPCGVHECGDGCSAKACRRNMQLSAGVQLPLEVFMTESKGWGVRCREEVPAGAFVCCYVGQLITDAMAEVRKGVDHYLFDLDFFAHIYAEIAEKGMQAVAEEIPLHKIPPVLSVGMIRQAQINAADAARRLPEQQPQQQQPQQQQQQPAAGGAAPGGAAAGEQAAGGAEGGGAYGGGGAAAAATAAGTAPGAGDNMDGVEGPAAQRSGGEEAAAGPGSSGAAGGCGYRLDGMVTREGLAQAAHALAEACDALARSVADGASTNLGGENILAAIEAAKARAAAAATTSGGAAAADQHQLEQLDRAAALAAASKAAADAVKAGDPGAFYLQPIISRDEEKAAERAAAAAAAAAAAAGVPPALPSTSDVGNGGTTGSGGGGGAFSNRGPAGCAVGSPRALAARSGMEAAAQAAGGAASGPVAGPGAVEDHGEEYAPMLVIDARTTGNVGRFINHSCDGNLTIQAVFAGVYRSTLLYHVGLYACRNIPQLEELSYNYGYHKQQQQQQQAQRGGAAEKQFVMQCNCGAVGCIGNLM</sequence>
<organism>
    <name type="scientific">Chlamydomonas reinhardtii</name>
    <name type="common">Chlamydomonas smithii</name>
    <dbReference type="NCBI Taxonomy" id="3055"/>
    <lineage>
        <taxon>Eukaryota</taxon>
        <taxon>Viridiplantae</taxon>
        <taxon>Chlorophyta</taxon>
        <taxon>core chlorophytes</taxon>
        <taxon>Chlorophyceae</taxon>
        <taxon>CS clade</taxon>
        <taxon>Chlamydomonadales</taxon>
        <taxon>Chlamydomonadaceae</taxon>
        <taxon>Chlamydomonas</taxon>
    </lineage>
</organism>
<feature type="chain" id="PRO_0000281047" description="Histone-lysine N-methyltransferase, H3 lysine-9 specific SUVH3">
    <location>
        <begin position="1"/>
        <end position="957"/>
    </location>
</feature>
<feature type="domain" description="YDG" evidence="3">
    <location>
        <begin position="73"/>
        <end position="243"/>
    </location>
</feature>
<feature type="domain" description="Pre-SET">
    <location>
        <begin position="319"/>
        <end position="441"/>
    </location>
</feature>
<feature type="domain" description="SET" evidence="2">
    <location>
        <begin position="455"/>
        <end position="920"/>
    </location>
</feature>
<feature type="domain" description="Post-SET">
    <location>
        <begin position="941"/>
        <end position="957"/>
    </location>
</feature>
<feature type="region of interest" description="Disordered" evidence="4">
    <location>
        <begin position="182"/>
        <end position="209"/>
    </location>
</feature>
<feature type="region of interest" description="Disordered" evidence="4">
    <location>
        <begin position="552"/>
        <end position="595"/>
    </location>
</feature>
<feature type="region of interest" description="Disordered" evidence="4">
    <location>
        <begin position="611"/>
        <end position="647"/>
    </location>
</feature>
<feature type="region of interest" description="Disordered" evidence="4">
    <location>
        <begin position="783"/>
        <end position="805"/>
    </location>
</feature>
<feature type="compositionally biased region" description="Gly residues" evidence="4">
    <location>
        <begin position="183"/>
        <end position="198"/>
    </location>
</feature>
<feature type="compositionally biased region" description="Low complexity" evidence="4">
    <location>
        <begin position="560"/>
        <end position="578"/>
    </location>
</feature>
<feature type="compositionally biased region" description="Gly residues" evidence="4">
    <location>
        <begin position="793"/>
        <end position="805"/>
    </location>
</feature>
<reference key="1">
    <citation type="journal article" date="2005" name="Plant Cell">
        <title>Monomethyl histone H3 lysine 4 as an epigenetic mark for silenced euchromatin in Chlamydomonas.</title>
        <authorList>
            <person name="van Dijk K."/>
            <person name="Marley K.E."/>
            <person name="Jeong B.-R."/>
            <person name="Xu J."/>
            <person name="Hesson J."/>
            <person name="Cerny R.L."/>
            <person name="Waterborg J.H."/>
            <person name="Cerutti H."/>
        </authorList>
    </citation>
    <scope>NUCLEOTIDE SEQUENCE [MRNA]</scope>
</reference>
<reference key="2">
    <citation type="journal article" date="2007" name="Nucleic Acids Res.">
        <title>SET3p monomethylates histone H3 on lysine 9 and is required for the silencing of tandemly repeated transgenes in Chlamydomonas.</title>
        <authorList>
            <person name="Casas-Mollano J.A."/>
            <person name="van Dijk K."/>
            <person name="Eisenhart J."/>
            <person name="Cerutti H."/>
        </authorList>
    </citation>
    <scope>FUNCTION</scope>
    <scope>CATALYTIC ACTIVITY</scope>
    <scope>DISRUPTION PHENOTYPE</scope>
</reference>
<keyword id="KW-0156">Chromatin regulator</keyword>
<keyword id="KW-0158">Chromosome</keyword>
<keyword id="KW-0489">Methyltransferase</keyword>
<keyword id="KW-0539">Nucleus</keyword>
<keyword id="KW-0949">S-adenosyl-L-methionine</keyword>
<keyword id="KW-0808">Transferase</keyword>
<comment type="function">
    <text evidence="5">Histone methyltransferase. Monomethylates specifically 'Lys-9' of histone H3. H3 'Lys-9Me1' (H3K9me1) functions as an epigenetic mark of repressed chromatin.</text>
</comment>
<comment type="catalytic activity">
    <reaction evidence="5">
        <text>L-lysyl(9)-[histone H3] + S-adenosyl-L-methionine = N(6)-methyl-L-lysyl(9)-[histone H3] + S-adenosyl-L-homocysteine + H(+)</text>
        <dbReference type="Rhea" id="RHEA:60280"/>
        <dbReference type="Rhea" id="RHEA-COMP:15542"/>
        <dbReference type="Rhea" id="RHEA-COMP:15546"/>
        <dbReference type="ChEBI" id="CHEBI:15378"/>
        <dbReference type="ChEBI" id="CHEBI:29969"/>
        <dbReference type="ChEBI" id="CHEBI:57856"/>
        <dbReference type="ChEBI" id="CHEBI:59789"/>
        <dbReference type="ChEBI" id="CHEBI:61929"/>
        <dbReference type="EC" id="2.1.1.367"/>
    </reaction>
</comment>
<comment type="subcellular location">
    <subcellularLocation>
        <location evidence="3">Nucleus</location>
    </subcellularLocation>
    <subcellularLocation>
        <location evidence="1">Chromosome</location>
    </subcellularLocation>
</comment>
<comment type="disruption phenotype">
    <text evidence="5">Loss of function mutant (T-DNA insertion) releases the transcriptional silencing of tandem transgenes.</text>
</comment>
<comment type="similarity">
    <text evidence="2">Belongs to the class V-like SAM-binding methyltransferase superfamily. Histone-lysine methyltransferase family. Suvar3-9 subfamily.</text>
</comment>
<proteinExistence type="evidence at protein level"/>
<gene>
    <name type="primary">SUVH3</name>
    <name type="synonym">SET3</name>
</gene>
<name>SUVH3_CHLRE</name>